<dbReference type="EMBL" id="D89618">
    <property type="protein sequence ID" value="BAA20378.1"/>
    <property type="molecule type" value="mRNA"/>
</dbReference>
<dbReference type="EMBL" id="Y12394">
    <property type="protein sequence ID" value="CAA73026.1"/>
    <property type="molecule type" value="mRNA"/>
</dbReference>
<dbReference type="EMBL" id="AF034756">
    <property type="protein sequence ID" value="AAB87693.1"/>
    <property type="molecule type" value="mRNA"/>
</dbReference>
<dbReference type="EMBL" id="AF005263">
    <property type="protein sequence ID" value="AAQ13404.1"/>
    <property type="molecule type" value="mRNA"/>
</dbReference>
<dbReference type="EMBL" id="AK290528">
    <property type="protein sequence ID" value="BAF83217.1"/>
    <property type="molecule type" value="mRNA"/>
</dbReference>
<dbReference type="EMBL" id="AK291000">
    <property type="protein sequence ID" value="BAF83689.1"/>
    <property type="molecule type" value="mRNA"/>
</dbReference>
<dbReference type="EMBL" id="AL136301">
    <property type="status" value="NOT_ANNOTATED_CDS"/>
    <property type="molecule type" value="Genomic_DNA"/>
</dbReference>
<dbReference type="EMBL" id="AL135901">
    <property type="status" value="NOT_ANNOTATED_CDS"/>
    <property type="molecule type" value="Genomic_DNA"/>
</dbReference>
<dbReference type="EMBL" id="CH471075">
    <property type="protein sequence ID" value="EAX08837.1"/>
    <property type="molecule type" value="Genomic_DNA"/>
</dbReference>
<dbReference type="EMBL" id="BC017355">
    <property type="protein sequence ID" value="AAH17355.1"/>
    <property type="molecule type" value="mRNA"/>
</dbReference>
<dbReference type="EMBL" id="BC024202">
    <property type="protein sequence ID" value="AAH24202.1"/>
    <property type="molecule type" value="mRNA"/>
</dbReference>
<dbReference type="EMBL" id="BC035090">
    <property type="protein sequence ID" value="AAH35090.1"/>
    <property type="molecule type" value="mRNA"/>
</dbReference>
<dbReference type="CCDS" id="CCDS9421.1"/>
<dbReference type="RefSeq" id="NP_002258.2">
    <property type="nucleotide sequence ID" value="NM_002267.3"/>
</dbReference>
<dbReference type="SMR" id="O00505"/>
<dbReference type="BioGRID" id="110037">
    <property type="interactions" value="259"/>
</dbReference>
<dbReference type="ComplexPortal" id="CPX-1057">
    <property type="entry name" value="Importin complex, KPNA3 variant"/>
</dbReference>
<dbReference type="CORUM" id="O00505"/>
<dbReference type="DIP" id="DIP-27586N"/>
<dbReference type="FunCoup" id="O00505">
    <property type="interactions" value="3009"/>
</dbReference>
<dbReference type="IntAct" id="O00505">
    <property type="interactions" value="154"/>
</dbReference>
<dbReference type="MINT" id="O00505"/>
<dbReference type="STRING" id="9606.ENSP00000261667"/>
<dbReference type="ChEMBL" id="CHEMBL4523119"/>
<dbReference type="TCDB" id="1.I.1.1.3">
    <property type="family name" value="the nuclear pore complex (npc) family"/>
</dbReference>
<dbReference type="GlyGen" id="O00505">
    <property type="glycosylation" value="1 site, 1 O-linked glycan (1 site)"/>
</dbReference>
<dbReference type="iPTMnet" id="O00505"/>
<dbReference type="PhosphoSitePlus" id="O00505"/>
<dbReference type="SwissPalm" id="O00505"/>
<dbReference type="BioMuta" id="KPNA3"/>
<dbReference type="jPOST" id="O00505"/>
<dbReference type="MassIVE" id="O00505"/>
<dbReference type="PaxDb" id="9606-ENSP00000261667"/>
<dbReference type="PeptideAtlas" id="O00505"/>
<dbReference type="ProteomicsDB" id="47946"/>
<dbReference type="Pumba" id="O00505"/>
<dbReference type="Antibodypedia" id="23966">
    <property type="antibodies" value="202 antibodies from 32 providers"/>
</dbReference>
<dbReference type="DNASU" id="3839"/>
<dbReference type="Ensembl" id="ENST00000261667.8">
    <property type="protein sequence ID" value="ENSP00000261667.3"/>
    <property type="gene ID" value="ENSG00000102753.10"/>
</dbReference>
<dbReference type="GeneID" id="3839"/>
<dbReference type="KEGG" id="hsa:3839"/>
<dbReference type="MANE-Select" id="ENST00000261667.8">
    <property type="protein sequence ID" value="ENSP00000261667.3"/>
    <property type="RefSeq nucleotide sequence ID" value="NM_002267.4"/>
    <property type="RefSeq protein sequence ID" value="NP_002258.2"/>
</dbReference>
<dbReference type="UCSC" id="uc001vdj.2">
    <property type="organism name" value="human"/>
</dbReference>
<dbReference type="AGR" id="HGNC:6396"/>
<dbReference type="CTD" id="3839"/>
<dbReference type="DisGeNET" id="3839"/>
<dbReference type="GeneCards" id="KPNA3"/>
<dbReference type="HGNC" id="HGNC:6396">
    <property type="gene designation" value="KPNA3"/>
</dbReference>
<dbReference type="HPA" id="ENSG00000102753">
    <property type="expression patterns" value="Tissue enhanced (skeletal muscle, tongue)"/>
</dbReference>
<dbReference type="MalaCards" id="KPNA3"/>
<dbReference type="MIM" id="601892">
    <property type="type" value="gene"/>
</dbReference>
<dbReference type="MIM" id="620106">
    <property type="type" value="phenotype"/>
</dbReference>
<dbReference type="neXtProt" id="NX_O00505"/>
<dbReference type="OpenTargets" id="ENSG00000102753"/>
<dbReference type="Orphanet" id="171612">
    <property type="disease" value="Autosomal dominant spastic paraplegia type 37"/>
</dbReference>
<dbReference type="PharmGKB" id="PA30187"/>
<dbReference type="VEuPathDB" id="HostDB:ENSG00000102753"/>
<dbReference type="eggNOG" id="KOG0166">
    <property type="taxonomic scope" value="Eukaryota"/>
</dbReference>
<dbReference type="GeneTree" id="ENSGT01050000244891"/>
<dbReference type="HOGENOM" id="CLU_018084_6_1_1"/>
<dbReference type="InParanoid" id="O00505"/>
<dbReference type="OMA" id="GGNEHIQ"/>
<dbReference type="OrthoDB" id="29145at2759"/>
<dbReference type="PAN-GO" id="O00505">
    <property type="GO annotations" value="5 GO annotations based on evolutionary models"/>
</dbReference>
<dbReference type="PhylomeDB" id="O00505"/>
<dbReference type="TreeFam" id="TF101178"/>
<dbReference type="PathwayCommons" id="O00505"/>
<dbReference type="Reactome" id="R-HSA-1169408">
    <property type="pathway name" value="ISG15 antiviral mechanism"/>
</dbReference>
<dbReference type="Reactome" id="R-HSA-168276">
    <property type="pathway name" value="NS1 Mediated Effects on Host Pathways"/>
</dbReference>
<dbReference type="SignaLink" id="O00505"/>
<dbReference type="SIGNOR" id="O00505"/>
<dbReference type="BioGRID-ORCS" id="3839">
    <property type="hits" value="15 hits in 1160 CRISPR screens"/>
</dbReference>
<dbReference type="CD-CODE" id="91857CE7">
    <property type="entry name" value="Nucleolus"/>
</dbReference>
<dbReference type="CD-CODE" id="DEE660B4">
    <property type="entry name" value="Stress granule"/>
</dbReference>
<dbReference type="ChiTaRS" id="KPNA3">
    <property type="organism name" value="human"/>
</dbReference>
<dbReference type="GeneWiki" id="KPNA3"/>
<dbReference type="GenomeRNAi" id="3839"/>
<dbReference type="Pharos" id="O00505">
    <property type="development level" value="Tbio"/>
</dbReference>
<dbReference type="PRO" id="PR:O00505"/>
<dbReference type="Proteomes" id="UP000005640">
    <property type="component" value="Chromosome 13"/>
</dbReference>
<dbReference type="RNAct" id="O00505">
    <property type="molecule type" value="protein"/>
</dbReference>
<dbReference type="Bgee" id="ENSG00000102753">
    <property type="expression patterns" value="Expressed in biceps brachii and 212 other cell types or tissues"/>
</dbReference>
<dbReference type="ExpressionAtlas" id="O00505">
    <property type="expression patterns" value="baseline and differential"/>
</dbReference>
<dbReference type="GO" id="GO:0005829">
    <property type="term" value="C:cytosol"/>
    <property type="evidence" value="ECO:0000314"/>
    <property type="project" value="HPA"/>
</dbReference>
<dbReference type="GO" id="GO:0043657">
    <property type="term" value="C:host cell"/>
    <property type="evidence" value="ECO:0007669"/>
    <property type="project" value="GOC"/>
</dbReference>
<dbReference type="GO" id="GO:0042564">
    <property type="term" value="C:NLS-dependent protein nuclear import complex"/>
    <property type="evidence" value="ECO:0000353"/>
    <property type="project" value="ComplexPortal"/>
</dbReference>
<dbReference type="GO" id="GO:0005643">
    <property type="term" value="C:nuclear pore"/>
    <property type="evidence" value="ECO:0000304"/>
    <property type="project" value="ProtInc"/>
</dbReference>
<dbReference type="GO" id="GO:0005654">
    <property type="term" value="C:nucleoplasm"/>
    <property type="evidence" value="ECO:0000314"/>
    <property type="project" value="HPA"/>
</dbReference>
<dbReference type="GO" id="GO:0005634">
    <property type="term" value="C:nucleus"/>
    <property type="evidence" value="ECO:0000318"/>
    <property type="project" value="GO_Central"/>
</dbReference>
<dbReference type="GO" id="GO:0061608">
    <property type="term" value="F:nuclear import signal receptor activity"/>
    <property type="evidence" value="ECO:0000318"/>
    <property type="project" value="GO_Central"/>
</dbReference>
<dbReference type="GO" id="GO:0008139">
    <property type="term" value="F:nuclear localization sequence binding"/>
    <property type="evidence" value="ECO:0000318"/>
    <property type="project" value="GO_Central"/>
</dbReference>
<dbReference type="GO" id="GO:0006607">
    <property type="term" value="P:NLS-bearing protein import into nucleus"/>
    <property type="evidence" value="ECO:0000318"/>
    <property type="project" value="GO_Central"/>
</dbReference>
<dbReference type="GO" id="GO:0006606">
    <property type="term" value="P:protein import into nucleus"/>
    <property type="evidence" value="ECO:0000250"/>
    <property type="project" value="ComplexPortal"/>
</dbReference>
<dbReference type="GO" id="GO:0065003">
    <property type="term" value="P:protein-containing complex assembly"/>
    <property type="evidence" value="ECO:0000304"/>
    <property type="project" value="ProtInc"/>
</dbReference>
<dbReference type="GO" id="GO:0046718">
    <property type="term" value="P:symbiont entry into host cell"/>
    <property type="evidence" value="ECO:0007669"/>
    <property type="project" value="UniProtKB-KW"/>
</dbReference>
<dbReference type="GO" id="GO:0075732">
    <property type="term" value="P:viral penetration into host nucleus"/>
    <property type="evidence" value="ECO:0007669"/>
    <property type="project" value="UniProtKB-KW"/>
</dbReference>
<dbReference type="FunFam" id="1.20.5.690:FF:000004">
    <property type="entry name" value="Importin subunit alpha"/>
    <property type="match status" value="1"/>
</dbReference>
<dbReference type="FunFam" id="1.25.10.10:FF:000009">
    <property type="entry name" value="Importin subunit alpha"/>
    <property type="match status" value="1"/>
</dbReference>
<dbReference type="Gene3D" id="1.20.5.690">
    <property type="entry name" value="Importin-alpha, importin-beta-binding domain"/>
    <property type="match status" value="1"/>
</dbReference>
<dbReference type="Gene3D" id="1.25.10.10">
    <property type="entry name" value="Leucine-rich Repeat Variant"/>
    <property type="match status" value="1"/>
</dbReference>
<dbReference type="InterPro" id="IPR011989">
    <property type="entry name" value="ARM-like"/>
</dbReference>
<dbReference type="InterPro" id="IPR016024">
    <property type="entry name" value="ARM-type_fold"/>
</dbReference>
<dbReference type="InterPro" id="IPR032413">
    <property type="entry name" value="Arm_3"/>
</dbReference>
<dbReference type="InterPro" id="IPR000225">
    <property type="entry name" value="Armadillo"/>
</dbReference>
<dbReference type="InterPro" id="IPR002652">
    <property type="entry name" value="Importin-a_IBB"/>
</dbReference>
<dbReference type="InterPro" id="IPR036975">
    <property type="entry name" value="Importin-a_IBB_sf"/>
</dbReference>
<dbReference type="InterPro" id="IPR024931">
    <property type="entry name" value="Importin_alpha"/>
</dbReference>
<dbReference type="PANTHER" id="PTHR23316">
    <property type="entry name" value="IMPORTIN ALPHA"/>
    <property type="match status" value="1"/>
</dbReference>
<dbReference type="Pfam" id="PF00514">
    <property type="entry name" value="Arm"/>
    <property type="match status" value="8"/>
</dbReference>
<dbReference type="Pfam" id="PF16186">
    <property type="entry name" value="Arm_3"/>
    <property type="match status" value="1"/>
</dbReference>
<dbReference type="Pfam" id="PF01749">
    <property type="entry name" value="IBB"/>
    <property type="match status" value="1"/>
</dbReference>
<dbReference type="PIRSF" id="PIRSF005673">
    <property type="entry name" value="Importin_alpha"/>
    <property type="match status" value="1"/>
</dbReference>
<dbReference type="SMART" id="SM00185">
    <property type="entry name" value="ARM"/>
    <property type="match status" value="8"/>
</dbReference>
<dbReference type="SUPFAM" id="SSF48371">
    <property type="entry name" value="ARM repeat"/>
    <property type="match status" value="1"/>
</dbReference>
<dbReference type="PROSITE" id="PS50176">
    <property type="entry name" value="ARM_REPEAT"/>
    <property type="match status" value="3"/>
</dbReference>
<dbReference type="PROSITE" id="PS51214">
    <property type="entry name" value="IBB"/>
    <property type="match status" value="1"/>
</dbReference>
<evidence type="ECO:0000250" key="1"/>
<evidence type="ECO:0000255" key="2">
    <source>
        <dbReference type="PROSITE-ProRule" id="PRU00561"/>
    </source>
</evidence>
<evidence type="ECO:0000256" key="3">
    <source>
        <dbReference type="SAM" id="MobiDB-lite"/>
    </source>
</evidence>
<evidence type="ECO:0000269" key="4">
    <source>
    </source>
</evidence>
<evidence type="ECO:0000269" key="5">
    <source>
    </source>
</evidence>
<evidence type="ECO:0000269" key="6">
    <source>
    </source>
</evidence>
<evidence type="ECO:0000269" key="7">
    <source>
    </source>
</evidence>
<evidence type="ECO:0000269" key="8">
    <source>
    </source>
</evidence>
<evidence type="ECO:0000269" key="9">
    <source>
    </source>
</evidence>
<evidence type="ECO:0000269" key="10">
    <source>
    </source>
</evidence>
<evidence type="ECO:0000305" key="11"/>
<evidence type="ECO:0000305" key="12">
    <source>
    </source>
</evidence>
<evidence type="ECO:0000305" key="13">
    <source>
    </source>
</evidence>
<evidence type="ECO:0007744" key="14">
    <source>
    </source>
</evidence>
<evidence type="ECO:0007744" key="15">
    <source>
    </source>
</evidence>
<evidence type="ECO:0007744" key="16">
    <source>
    </source>
</evidence>
<evidence type="ECO:0007744" key="17">
    <source>
    </source>
</evidence>
<evidence type="ECO:0007744" key="18">
    <source>
    </source>
</evidence>
<evidence type="ECO:0007744" key="19">
    <source>
    </source>
</evidence>
<evidence type="ECO:0007744" key="20">
    <source>
    </source>
</evidence>
<evidence type="ECO:0007744" key="21">
    <source>
    </source>
</evidence>
<organism>
    <name type="scientific">Homo sapiens</name>
    <name type="common">Human</name>
    <dbReference type="NCBI Taxonomy" id="9606"/>
    <lineage>
        <taxon>Eukaryota</taxon>
        <taxon>Metazoa</taxon>
        <taxon>Chordata</taxon>
        <taxon>Craniata</taxon>
        <taxon>Vertebrata</taxon>
        <taxon>Euteleostomi</taxon>
        <taxon>Mammalia</taxon>
        <taxon>Eutheria</taxon>
        <taxon>Euarchontoglires</taxon>
        <taxon>Primates</taxon>
        <taxon>Haplorrhini</taxon>
        <taxon>Catarrhini</taxon>
        <taxon>Hominidae</taxon>
        <taxon>Homo</taxon>
    </lineage>
</organism>
<protein>
    <recommendedName>
        <fullName>Importin subunit alpha-4</fullName>
    </recommendedName>
    <alternativeName>
        <fullName>Importin alpha Q2</fullName>
        <shortName>Qip2</shortName>
    </alternativeName>
    <alternativeName>
        <fullName>Karyopherin subunit alpha-3</fullName>
    </alternativeName>
    <alternativeName>
        <fullName>SRP1-gamma</fullName>
    </alternativeName>
</protein>
<name>IMA4_HUMAN</name>
<gene>
    <name type="primary">KPNA3</name>
    <name type="synonym">QIP2</name>
</gene>
<proteinExistence type="evidence at protein level"/>
<feature type="initiator methionine" description="Removed" evidence="16">
    <location>
        <position position="1"/>
    </location>
</feature>
<feature type="chain" id="PRO_0000120724" description="Importin subunit alpha-4">
    <location>
        <begin position="2"/>
        <end position="521"/>
    </location>
</feature>
<feature type="domain" description="IBB" evidence="2">
    <location>
        <begin position="2"/>
        <end position="58"/>
    </location>
</feature>
<feature type="repeat" description="ARM 1; truncated">
    <location>
        <begin position="66"/>
        <end position="106"/>
    </location>
</feature>
<feature type="repeat" description="ARM 2">
    <location>
        <begin position="107"/>
        <end position="149"/>
    </location>
</feature>
<feature type="repeat" description="ARM 3">
    <location>
        <begin position="150"/>
        <end position="194"/>
    </location>
</feature>
<feature type="repeat" description="ARM 4">
    <location>
        <begin position="195"/>
        <end position="233"/>
    </location>
</feature>
<feature type="repeat" description="ARM 5">
    <location>
        <begin position="234"/>
        <end position="278"/>
    </location>
</feature>
<feature type="repeat" description="ARM 6">
    <location>
        <begin position="279"/>
        <end position="318"/>
    </location>
</feature>
<feature type="repeat" description="ARM 7">
    <location>
        <begin position="319"/>
        <end position="360"/>
    </location>
</feature>
<feature type="repeat" description="ARM 8">
    <location>
        <begin position="361"/>
        <end position="400"/>
    </location>
</feature>
<feature type="repeat" description="ARM 9">
    <location>
        <begin position="401"/>
        <end position="443"/>
    </location>
</feature>
<feature type="repeat" description="ARM 10; atypical">
    <location>
        <begin position="447"/>
        <end position="485"/>
    </location>
</feature>
<feature type="region of interest" description="Disordered" evidence="3">
    <location>
        <begin position="1"/>
        <end position="29"/>
    </location>
</feature>
<feature type="region of interest" description="NLS binding site (major)" evidence="1">
    <location>
        <begin position="137"/>
        <end position="229"/>
    </location>
</feature>
<feature type="region of interest" description="NLS binding site (minor)" evidence="1">
    <location>
        <begin position="306"/>
        <end position="394"/>
    </location>
</feature>
<feature type="short sequence motif" description="Nuclear localization signal" evidence="1">
    <location>
        <begin position="43"/>
        <end position="52"/>
    </location>
</feature>
<feature type="compositionally biased region" description="Basic and acidic residues" evidence="3">
    <location>
        <begin position="18"/>
        <end position="29"/>
    </location>
</feature>
<feature type="modified residue" description="N-acetylalanine" evidence="16">
    <location>
        <position position="2"/>
    </location>
</feature>
<feature type="modified residue" description="Phosphoserine" evidence="17 18 20 21">
    <location>
        <position position="56"/>
    </location>
</feature>
<feature type="modified residue" description="Phosphoserine" evidence="14 15 17 18 19 20 21">
    <location>
        <position position="60"/>
    </location>
</feature>
<feature type="modified residue" description="Phosphotyrosine" evidence="21">
    <location>
        <position position="484"/>
    </location>
</feature>
<feature type="sequence variant" id="VAR_014454" description="In dbSNP:rs1043015.">
    <original>P</original>
    <variation>S</variation>
    <location>
        <position position="291"/>
    </location>
</feature>
<feature type="sequence variant" id="VAR_087813" description="In SPG88; decreased interaction with RCC1 and DDX21; no effect on interaction with NCBP1 and NCBP2." evidence="7 9">
    <original>T</original>
    <variation>I</variation>
    <location>
        <position position="315"/>
    </location>
</feature>
<feature type="sequence variant" id="VAR_087814" description="In SPG88; decreased interaction with RCC1 and DDX21; no effect on interaction with NCBP1 and NCBP2." evidence="7">
    <original>L</original>
    <variation>M</variation>
    <location>
        <position position="328"/>
    </location>
</feature>
<feature type="sequence variant" id="VAR_087815" description="In SPG88; loss of interaction with DDX21 and NCBP1; severely decreased interaction with RCC1 and NCBP2; compared to the wild type, the mutant shows increased cytoplasmic levels." evidence="7 8">
    <original>L</original>
    <variation>P</variation>
    <location>
        <position position="328"/>
    </location>
</feature>
<feature type="sequence variant" id="VAR_087816" description="In SPG88; decreased interaction with RCC1, DDX21, NCBP1 and NCBP2; compared to the wild type, the mutant shows increased cytoplasmic levels." evidence="7">
    <original>L</original>
    <variation>R</variation>
    <location>
        <position position="334"/>
    </location>
</feature>
<feature type="sequence variant" id="VAR_087817" description="In SPG88; loss of interaction with RCC1, DDX21, NCBP1 and NCBP2." evidence="7">
    <original>L</original>
    <variation>P</variation>
    <location>
        <position position="350"/>
    </location>
</feature>
<feature type="sequence variant" id="VAR_087818" description="In SPG88; loss of interaction with RCC1; severely decreased interaction with DDX21 and NCBP1; no effect on interaction with NCBP2." evidence="7">
    <original>P</original>
    <variation>L</variation>
    <location>
        <position position="415"/>
    </location>
</feature>
<feature type="sequence conflict" description="In Ref. 2; CAA73026." evidence="11" ref="2">
    <original>V</original>
    <variation>M</variation>
    <location>
        <position position="34"/>
    </location>
</feature>
<feature type="sequence conflict" description="In Ref. 1; BAA20378." evidence="11" ref="1">
    <original>R</original>
    <variation>Q</variation>
    <location>
        <position position="103"/>
    </location>
</feature>
<feature type="sequence conflict" description="In Ref. 8; AAH35090." evidence="11" ref="8">
    <original>AV</original>
    <variation>DI</variation>
    <location>
        <begin position="152"/>
        <end position="153"/>
    </location>
</feature>
<feature type="sequence conflict" description="In Ref. 3; AAB87693." evidence="11" ref="3">
    <original>V</original>
    <variation>G</variation>
    <location>
        <position position="154"/>
    </location>
</feature>
<feature type="sequence conflict" description="In Ref. 3; AAB87693." evidence="11" ref="3">
    <original>P</original>
    <variation>T</variation>
    <location>
        <position position="236"/>
    </location>
</feature>
<feature type="sequence conflict" description="In Ref. 2; CAA73026." evidence="11" ref="2">
    <original>M</original>
    <variation>L</variation>
    <location>
        <position position="237"/>
    </location>
</feature>
<feature type="sequence conflict" description="In Ref. 2; CAA73026." evidence="11" ref="2">
    <original>I</original>
    <variation>V</variation>
    <location>
        <position position="256"/>
    </location>
</feature>
<feature type="sequence conflict" description="In Ref. 2; CAA73026." evidence="11" ref="2">
    <original>L</original>
    <variation>V</variation>
    <location>
        <position position="259"/>
    </location>
</feature>
<feature type="sequence conflict" description="In Ref. 8; AAH35090." evidence="11" ref="8">
    <original>P</original>
    <variation>Q</variation>
    <location>
        <position position="332"/>
    </location>
</feature>
<feature type="sequence conflict" description="In Ref. 8; AAH35090." evidence="11" ref="8">
    <original>N</original>
    <variation>D</variation>
    <location>
        <position position="411"/>
    </location>
</feature>
<reference key="1">
    <citation type="journal article" date="1997" name="Cytogenet. Cell Genet.">
        <title>Isolation and mapping of karyopherin alpha 3 (KPNA3), a human gene that is highly homologous to genes encoding Xenopus importin, yeast SRP1 and human RCH1.</title>
        <authorList>
            <person name="Takeda S."/>
            <person name="Fujiwara T."/>
            <person name="Shimizu F."/>
            <person name="Kawai A."/>
            <person name="Shinomiya K."/>
            <person name="Okuno S."/>
            <person name="Ozaki K."/>
            <person name="Katagiri T."/>
            <person name="Shimada Y."/>
            <person name="Nagata M."/>
            <person name="Watanabe T."/>
            <person name="Takaichi A."/>
            <person name="Kuga Y."/>
            <person name="Suzuki M."/>
            <person name="Hishigaki H."/>
            <person name="Takahashi E."/>
            <person name="Shin S."/>
            <person name="Nakamura Y."/>
            <person name="Hirai Y."/>
        </authorList>
    </citation>
    <scope>NUCLEOTIDE SEQUENCE [MRNA]</scope>
    <source>
        <tissue>Fetal brain</tissue>
    </source>
</reference>
<reference key="2">
    <citation type="journal article" date="1997" name="FEBS Lett.">
        <title>Cloning of two novel human importin-alpha subunits and analysis of the expression pattern of the importin-alpha protein family.</title>
        <authorList>
            <person name="Koehler M."/>
            <person name="Ansieau S."/>
            <person name="Prehn S."/>
            <person name="Leutz A."/>
            <person name="Haller H."/>
            <person name="Hartmann E."/>
        </authorList>
    </citation>
    <scope>NUCLEOTIDE SEQUENCE [MRNA]</scope>
    <source>
        <tissue>Lung</tissue>
    </source>
</reference>
<reference key="3">
    <citation type="journal article" date="1998" name="Proc. Natl. Acad. Sci. U.S.A.">
        <title>Cloning and characterization of hSRP1 gamma, a tissue-specific nuclear transport factor.</title>
        <authorList>
            <person name="Nachury M.V."/>
            <person name="Ryder U.W."/>
            <person name="Lamond A.I."/>
            <person name="Weis K."/>
        </authorList>
    </citation>
    <scope>NUCLEOTIDE SEQUENCE [MRNA]</scope>
</reference>
<reference key="4">
    <citation type="submission" date="1997-05" db="EMBL/GenBank/DDBJ databases">
        <title>Importin alpha-3, a novel variant of the small importin subunit evolutionarily conserved from hydrozoa to man.</title>
        <authorList>
            <person name="Fischer R."/>
        </authorList>
    </citation>
    <scope>NUCLEOTIDE SEQUENCE [MRNA]</scope>
</reference>
<reference key="5">
    <citation type="journal article" date="2004" name="Nat. Genet.">
        <title>Complete sequencing and characterization of 21,243 full-length human cDNAs.</title>
        <authorList>
            <person name="Ota T."/>
            <person name="Suzuki Y."/>
            <person name="Nishikawa T."/>
            <person name="Otsuki T."/>
            <person name="Sugiyama T."/>
            <person name="Irie R."/>
            <person name="Wakamatsu A."/>
            <person name="Hayashi K."/>
            <person name="Sato H."/>
            <person name="Nagai K."/>
            <person name="Kimura K."/>
            <person name="Makita H."/>
            <person name="Sekine M."/>
            <person name="Obayashi M."/>
            <person name="Nishi T."/>
            <person name="Shibahara T."/>
            <person name="Tanaka T."/>
            <person name="Ishii S."/>
            <person name="Yamamoto J."/>
            <person name="Saito K."/>
            <person name="Kawai Y."/>
            <person name="Isono Y."/>
            <person name="Nakamura Y."/>
            <person name="Nagahari K."/>
            <person name="Murakami K."/>
            <person name="Yasuda T."/>
            <person name="Iwayanagi T."/>
            <person name="Wagatsuma M."/>
            <person name="Shiratori A."/>
            <person name="Sudo H."/>
            <person name="Hosoiri T."/>
            <person name="Kaku Y."/>
            <person name="Kodaira H."/>
            <person name="Kondo H."/>
            <person name="Sugawara M."/>
            <person name="Takahashi M."/>
            <person name="Kanda K."/>
            <person name="Yokoi T."/>
            <person name="Furuya T."/>
            <person name="Kikkawa E."/>
            <person name="Omura Y."/>
            <person name="Abe K."/>
            <person name="Kamihara K."/>
            <person name="Katsuta N."/>
            <person name="Sato K."/>
            <person name="Tanikawa M."/>
            <person name="Yamazaki M."/>
            <person name="Ninomiya K."/>
            <person name="Ishibashi T."/>
            <person name="Yamashita H."/>
            <person name="Murakawa K."/>
            <person name="Fujimori K."/>
            <person name="Tanai H."/>
            <person name="Kimata M."/>
            <person name="Watanabe M."/>
            <person name="Hiraoka S."/>
            <person name="Chiba Y."/>
            <person name="Ishida S."/>
            <person name="Ono Y."/>
            <person name="Takiguchi S."/>
            <person name="Watanabe S."/>
            <person name="Yosida M."/>
            <person name="Hotuta T."/>
            <person name="Kusano J."/>
            <person name="Kanehori K."/>
            <person name="Takahashi-Fujii A."/>
            <person name="Hara H."/>
            <person name="Tanase T.-O."/>
            <person name="Nomura Y."/>
            <person name="Togiya S."/>
            <person name="Komai F."/>
            <person name="Hara R."/>
            <person name="Takeuchi K."/>
            <person name="Arita M."/>
            <person name="Imose N."/>
            <person name="Musashino K."/>
            <person name="Yuuki H."/>
            <person name="Oshima A."/>
            <person name="Sasaki N."/>
            <person name="Aotsuka S."/>
            <person name="Yoshikawa Y."/>
            <person name="Matsunawa H."/>
            <person name="Ichihara T."/>
            <person name="Shiohata N."/>
            <person name="Sano S."/>
            <person name="Moriya S."/>
            <person name="Momiyama H."/>
            <person name="Satoh N."/>
            <person name="Takami S."/>
            <person name="Terashima Y."/>
            <person name="Suzuki O."/>
            <person name="Nakagawa S."/>
            <person name="Senoh A."/>
            <person name="Mizoguchi H."/>
            <person name="Goto Y."/>
            <person name="Shimizu F."/>
            <person name="Wakebe H."/>
            <person name="Hishigaki H."/>
            <person name="Watanabe T."/>
            <person name="Sugiyama A."/>
            <person name="Takemoto M."/>
            <person name="Kawakami B."/>
            <person name="Yamazaki M."/>
            <person name="Watanabe K."/>
            <person name="Kumagai A."/>
            <person name="Itakura S."/>
            <person name="Fukuzumi Y."/>
            <person name="Fujimori Y."/>
            <person name="Komiyama M."/>
            <person name="Tashiro H."/>
            <person name="Tanigami A."/>
            <person name="Fujiwara T."/>
            <person name="Ono T."/>
            <person name="Yamada K."/>
            <person name="Fujii Y."/>
            <person name="Ozaki K."/>
            <person name="Hirao M."/>
            <person name="Ohmori Y."/>
            <person name="Kawabata A."/>
            <person name="Hikiji T."/>
            <person name="Kobatake N."/>
            <person name="Inagaki H."/>
            <person name="Ikema Y."/>
            <person name="Okamoto S."/>
            <person name="Okitani R."/>
            <person name="Kawakami T."/>
            <person name="Noguchi S."/>
            <person name="Itoh T."/>
            <person name="Shigeta K."/>
            <person name="Senba T."/>
            <person name="Matsumura K."/>
            <person name="Nakajima Y."/>
            <person name="Mizuno T."/>
            <person name="Morinaga M."/>
            <person name="Sasaki M."/>
            <person name="Togashi T."/>
            <person name="Oyama M."/>
            <person name="Hata H."/>
            <person name="Watanabe M."/>
            <person name="Komatsu T."/>
            <person name="Mizushima-Sugano J."/>
            <person name="Satoh T."/>
            <person name="Shirai Y."/>
            <person name="Takahashi Y."/>
            <person name="Nakagawa K."/>
            <person name="Okumura K."/>
            <person name="Nagase T."/>
            <person name="Nomura N."/>
            <person name="Kikuchi H."/>
            <person name="Masuho Y."/>
            <person name="Yamashita R."/>
            <person name="Nakai K."/>
            <person name="Yada T."/>
            <person name="Nakamura Y."/>
            <person name="Ohara O."/>
            <person name="Isogai T."/>
            <person name="Sugano S."/>
        </authorList>
    </citation>
    <scope>NUCLEOTIDE SEQUENCE [LARGE SCALE MRNA]</scope>
    <source>
        <tissue>Brain</tissue>
    </source>
</reference>
<reference key="6">
    <citation type="journal article" date="2004" name="Nature">
        <title>The DNA sequence and analysis of human chromosome 13.</title>
        <authorList>
            <person name="Dunham A."/>
            <person name="Matthews L.H."/>
            <person name="Burton J."/>
            <person name="Ashurst J.L."/>
            <person name="Howe K.L."/>
            <person name="Ashcroft K.J."/>
            <person name="Beare D.M."/>
            <person name="Burford D.C."/>
            <person name="Hunt S.E."/>
            <person name="Griffiths-Jones S."/>
            <person name="Jones M.C."/>
            <person name="Keenan S.J."/>
            <person name="Oliver K."/>
            <person name="Scott C.E."/>
            <person name="Ainscough R."/>
            <person name="Almeida J.P."/>
            <person name="Ambrose K.D."/>
            <person name="Andrews D.T."/>
            <person name="Ashwell R.I.S."/>
            <person name="Babbage A.K."/>
            <person name="Bagguley C.L."/>
            <person name="Bailey J."/>
            <person name="Bannerjee R."/>
            <person name="Barlow K.F."/>
            <person name="Bates K."/>
            <person name="Beasley H."/>
            <person name="Bird C.P."/>
            <person name="Bray-Allen S."/>
            <person name="Brown A.J."/>
            <person name="Brown J.Y."/>
            <person name="Burrill W."/>
            <person name="Carder C."/>
            <person name="Carter N.P."/>
            <person name="Chapman J.C."/>
            <person name="Clamp M.E."/>
            <person name="Clark S.Y."/>
            <person name="Clarke G."/>
            <person name="Clee C.M."/>
            <person name="Clegg S.C."/>
            <person name="Cobley V."/>
            <person name="Collins J.E."/>
            <person name="Corby N."/>
            <person name="Coville G.J."/>
            <person name="Deloukas P."/>
            <person name="Dhami P."/>
            <person name="Dunham I."/>
            <person name="Dunn M."/>
            <person name="Earthrowl M.E."/>
            <person name="Ellington A.G."/>
            <person name="Faulkner L."/>
            <person name="Frankish A.G."/>
            <person name="Frankland J."/>
            <person name="French L."/>
            <person name="Garner P."/>
            <person name="Garnett J."/>
            <person name="Gilbert J.G.R."/>
            <person name="Gilson C.J."/>
            <person name="Ghori J."/>
            <person name="Grafham D.V."/>
            <person name="Gribble S.M."/>
            <person name="Griffiths C."/>
            <person name="Hall R.E."/>
            <person name="Hammond S."/>
            <person name="Harley J.L."/>
            <person name="Hart E.A."/>
            <person name="Heath P.D."/>
            <person name="Howden P.J."/>
            <person name="Huckle E.J."/>
            <person name="Hunt P.J."/>
            <person name="Hunt A.R."/>
            <person name="Johnson C."/>
            <person name="Johnson D."/>
            <person name="Kay M."/>
            <person name="Kimberley A.M."/>
            <person name="King A."/>
            <person name="Laird G.K."/>
            <person name="Langford C.J."/>
            <person name="Lawlor S."/>
            <person name="Leongamornlert D.A."/>
            <person name="Lloyd D.M."/>
            <person name="Lloyd C."/>
            <person name="Loveland J.E."/>
            <person name="Lovell J."/>
            <person name="Martin S."/>
            <person name="Mashreghi-Mohammadi M."/>
            <person name="McLaren S.J."/>
            <person name="McMurray A."/>
            <person name="Milne S."/>
            <person name="Moore M.J.F."/>
            <person name="Nickerson T."/>
            <person name="Palmer S.A."/>
            <person name="Pearce A.V."/>
            <person name="Peck A.I."/>
            <person name="Pelan S."/>
            <person name="Phillimore B."/>
            <person name="Porter K.M."/>
            <person name="Rice C.M."/>
            <person name="Searle S."/>
            <person name="Sehra H.K."/>
            <person name="Shownkeen R."/>
            <person name="Skuce C.D."/>
            <person name="Smith M."/>
            <person name="Steward C.A."/>
            <person name="Sycamore N."/>
            <person name="Tester J."/>
            <person name="Thomas D.W."/>
            <person name="Tracey A."/>
            <person name="Tromans A."/>
            <person name="Tubby B."/>
            <person name="Wall M."/>
            <person name="Wallis J.M."/>
            <person name="West A.P."/>
            <person name="Whitehead S.L."/>
            <person name="Willey D.L."/>
            <person name="Wilming L."/>
            <person name="Wray P.W."/>
            <person name="Wright M.W."/>
            <person name="Young L."/>
            <person name="Coulson A."/>
            <person name="Durbin R.M."/>
            <person name="Hubbard T."/>
            <person name="Sulston J.E."/>
            <person name="Beck S."/>
            <person name="Bentley D.R."/>
            <person name="Rogers J."/>
            <person name="Ross M.T."/>
        </authorList>
    </citation>
    <scope>NUCLEOTIDE SEQUENCE [LARGE SCALE GENOMIC DNA]</scope>
</reference>
<reference key="7">
    <citation type="submission" date="2005-09" db="EMBL/GenBank/DDBJ databases">
        <authorList>
            <person name="Mural R.J."/>
            <person name="Istrail S."/>
            <person name="Sutton G.G."/>
            <person name="Florea L."/>
            <person name="Halpern A.L."/>
            <person name="Mobarry C.M."/>
            <person name="Lippert R."/>
            <person name="Walenz B."/>
            <person name="Shatkay H."/>
            <person name="Dew I."/>
            <person name="Miller J.R."/>
            <person name="Flanigan M.J."/>
            <person name="Edwards N.J."/>
            <person name="Bolanos R."/>
            <person name="Fasulo D."/>
            <person name="Halldorsson B.V."/>
            <person name="Hannenhalli S."/>
            <person name="Turner R."/>
            <person name="Yooseph S."/>
            <person name="Lu F."/>
            <person name="Nusskern D.R."/>
            <person name="Shue B.C."/>
            <person name="Zheng X.H."/>
            <person name="Zhong F."/>
            <person name="Delcher A.L."/>
            <person name="Huson D.H."/>
            <person name="Kravitz S.A."/>
            <person name="Mouchard L."/>
            <person name="Reinert K."/>
            <person name="Remington K.A."/>
            <person name="Clark A.G."/>
            <person name="Waterman M.S."/>
            <person name="Eichler E.E."/>
            <person name="Adams M.D."/>
            <person name="Hunkapiller M.W."/>
            <person name="Myers E.W."/>
            <person name="Venter J.C."/>
        </authorList>
    </citation>
    <scope>NUCLEOTIDE SEQUENCE [LARGE SCALE GENOMIC DNA]</scope>
</reference>
<reference key="8">
    <citation type="journal article" date="2004" name="Genome Res.">
        <title>The status, quality, and expansion of the NIH full-length cDNA project: the Mammalian Gene Collection (MGC).</title>
        <authorList>
            <consortium name="The MGC Project Team"/>
        </authorList>
    </citation>
    <scope>NUCLEOTIDE SEQUENCE [LARGE SCALE MRNA]</scope>
    <source>
        <tissue>Brain</tissue>
        <tissue>Muscle</tissue>
    </source>
</reference>
<reference key="9">
    <citation type="journal article" date="2003" name="J. Biol. Chem.">
        <title>Importin alpha nuclear localization signal binding sites for STAT1, STAT2, and influenza A virus nucleoprotein.</title>
        <authorList>
            <person name="Melen K."/>
            <person name="Fagerlund R."/>
            <person name="Franke J."/>
            <person name="Koehler M."/>
            <person name="Kinnunen L."/>
            <person name="Julkunen I."/>
        </authorList>
    </citation>
    <scope>INTERACTION WITH INFLUENZA VIRUS NP (MICROBIAL INFECTION)</scope>
</reference>
<reference key="10">
    <citation type="journal article" date="2006" name="Cell">
        <title>Global, in vivo, and site-specific phosphorylation dynamics in signaling networks.</title>
        <authorList>
            <person name="Olsen J.V."/>
            <person name="Blagoev B."/>
            <person name="Gnad F."/>
            <person name="Macek B."/>
            <person name="Kumar C."/>
            <person name="Mortensen P."/>
            <person name="Mann M."/>
        </authorList>
    </citation>
    <scope>PHOSPHORYLATION [LARGE SCALE ANALYSIS] AT SER-60</scope>
    <scope>IDENTIFICATION BY MASS SPECTROMETRY [LARGE SCALE ANALYSIS]</scope>
    <source>
        <tissue>Cervix carcinoma</tissue>
    </source>
</reference>
<reference key="11">
    <citation type="journal article" date="2008" name="Proc. Natl. Acad. Sci. U.S.A.">
        <title>A quantitative atlas of mitotic phosphorylation.</title>
        <authorList>
            <person name="Dephoure N."/>
            <person name="Zhou C."/>
            <person name="Villen J."/>
            <person name="Beausoleil S.A."/>
            <person name="Bakalarski C.E."/>
            <person name="Elledge S.J."/>
            <person name="Gygi S.P."/>
        </authorList>
    </citation>
    <scope>IDENTIFICATION BY MASS SPECTROMETRY [LARGE SCALE ANALYSIS]</scope>
    <source>
        <tissue>Cervix carcinoma</tissue>
    </source>
</reference>
<reference key="12">
    <citation type="journal article" date="2008" name="Proteomics">
        <title>Large-scale phosphoproteome analysis of human liver tissue by enrichment and fractionation of phosphopeptides with strong anion exchange chromatography.</title>
        <authorList>
            <person name="Han G."/>
            <person name="Ye M."/>
            <person name="Zhou H."/>
            <person name="Jiang X."/>
            <person name="Feng S."/>
            <person name="Jiang X."/>
            <person name="Tian R."/>
            <person name="Wan D."/>
            <person name="Zou H."/>
            <person name="Gu J."/>
        </authorList>
    </citation>
    <scope>PHOSPHORYLATION [LARGE SCALE ANALYSIS] AT SER-60</scope>
    <scope>IDENTIFICATION BY MASS SPECTROMETRY [LARGE SCALE ANALYSIS]</scope>
    <source>
        <tissue>Liver</tissue>
    </source>
</reference>
<reference key="13">
    <citation type="journal article" date="2009" name="Anal. Chem.">
        <title>Lys-N and trypsin cover complementary parts of the phosphoproteome in a refined SCX-based approach.</title>
        <authorList>
            <person name="Gauci S."/>
            <person name="Helbig A.O."/>
            <person name="Slijper M."/>
            <person name="Krijgsveld J."/>
            <person name="Heck A.J."/>
            <person name="Mohammed S."/>
        </authorList>
    </citation>
    <scope>ACETYLATION [LARGE SCALE ANALYSIS] AT ALA-2</scope>
    <scope>CLEAVAGE OF INITIATOR METHIONINE [LARGE SCALE ANALYSIS]</scope>
    <scope>IDENTIFICATION BY MASS SPECTROMETRY [LARGE SCALE ANALYSIS]</scope>
</reference>
<reference key="14">
    <citation type="journal article" date="2009" name="Sci. Signal.">
        <title>Quantitative phosphoproteomic analysis of T cell receptor signaling reveals system-wide modulation of protein-protein interactions.</title>
        <authorList>
            <person name="Mayya V."/>
            <person name="Lundgren D.H."/>
            <person name="Hwang S.-I."/>
            <person name="Rezaul K."/>
            <person name="Wu L."/>
            <person name="Eng J.K."/>
            <person name="Rodionov V."/>
            <person name="Han D.K."/>
        </authorList>
    </citation>
    <scope>PHOSPHORYLATION [LARGE SCALE ANALYSIS] AT SER-56 AND SER-60</scope>
    <scope>IDENTIFICATION BY MASS SPECTROMETRY [LARGE SCALE ANALYSIS]</scope>
    <source>
        <tissue>Leukemic T-cell</tissue>
    </source>
</reference>
<reference key="15">
    <citation type="journal article" date="2010" name="J. Virol.">
        <title>Importin alpha3 interacts with HIV-1 integrase and contributes to HIV-1 nuclear import and replication.</title>
        <authorList>
            <person name="Ao Z."/>
            <person name="Danappa Jayappa K."/>
            <person name="Wang B."/>
            <person name="Zheng Y."/>
            <person name="Kung S."/>
            <person name="Rassart E."/>
            <person name="Depping R."/>
            <person name="Kohler M."/>
            <person name="Cohen E.A."/>
            <person name="Yao X."/>
        </authorList>
    </citation>
    <scope>INTERACTION WITH HIV-1 INTEGRASE (MICROBIAL INFECTION)</scope>
</reference>
<reference key="16">
    <citation type="journal article" date="2010" name="Sci. Signal.">
        <title>Quantitative phosphoproteomics reveals widespread full phosphorylation site occupancy during mitosis.</title>
        <authorList>
            <person name="Olsen J.V."/>
            <person name="Vermeulen M."/>
            <person name="Santamaria A."/>
            <person name="Kumar C."/>
            <person name="Miller M.L."/>
            <person name="Jensen L.J."/>
            <person name="Gnad F."/>
            <person name="Cox J."/>
            <person name="Jensen T.S."/>
            <person name="Nigg E.A."/>
            <person name="Brunak S."/>
            <person name="Mann M."/>
        </authorList>
    </citation>
    <scope>PHOSPHORYLATION [LARGE SCALE ANALYSIS] AT SER-56 AND SER-60</scope>
    <scope>IDENTIFICATION BY MASS SPECTROMETRY [LARGE SCALE ANALYSIS]</scope>
    <source>
        <tissue>Cervix carcinoma</tissue>
    </source>
</reference>
<reference key="17">
    <citation type="journal article" date="2011" name="BMC Syst. Biol.">
        <title>Initial characterization of the human central proteome.</title>
        <authorList>
            <person name="Burkard T.R."/>
            <person name="Planyavsky M."/>
            <person name="Kaupe I."/>
            <person name="Breitwieser F.P."/>
            <person name="Buerckstuemmer T."/>
            <person name="Bennett K.L."/>
            <person name="Superti-Furga G."/>
            <person name="Colinge J."/>
        </authorList>
    </citation>
    <scope>IDENTIFICATION BY MASS SPECTROMETRY [LARGE SCALE ANALYSIS]</scope>
</reference>
<reference key="18">
    <citation type="journal article" date="2011" name="Sci. Signal.">
        <title>System-wide temporal characterization of the proteome and phosphoproteome of human embryonic stem cell differentiation.</title>
        <authorList>
            <person name="Rigbolt K.T."/>
            <person name="Prokhorova T.A."/>
            <person name="Akimov V."/>
            <person name="Henningsen J."/>
            <person name="Johansen P.T."/>
            <person name="Kratchmarova I."/>
            <person name="Kassem M."/>
            <person name="Mann M."/>
            <person name="Olsen J.V."/>
            <person name="Blagoev B."/>
        </authorList>
    </citation>
    <scope>PHOSPHORYLATION [LARGE SCALE ANALYSIS] AT SER-60</scope>
    <scope>IDENTIFICATION BY MASS SPECTROMETRY [LARGE SCALE ANALYSIS]</scope>
</reference>
<reference key="19">
    <citation type="journal article" date="2013" name="J. Proteome Res.">
        <title>Toward a comprehensive characterization of a human cancer cell phosphoproteome.</title>
        <authorList>
            <person name="Zhou H."/>
            <person name="Di Palma S."/>
            <person name="Preisinger C."/>
            <person name="Peng M."/>
            <person name="Polat A.N."/>
            <person name="Heck A.J."/>
            <person name="Mohammed S."/>
        </authorList>
    </citation>
    <scope>PHOSPHORYLATION [LARGE SCALE ANALYSIS] AT SER-56 AND SER-60</scope>
    <scope>IDENTIFICATION BY MASS SPECTROMETRY [LARGE SCALE ANALYSIS]</scope>
    <source>
        <tissue>Cervix carcinoma</tissue>
        <tissue>Erythroleukemia</tissue>
    </source>
</reference>
<reference key="20">
    <citation type="journal article" date="2014" name="J. Proteomics">
        <title>An enzyme assisted RP-RPLC approach for in-depth analysis of human liver phosphoproteome.</title>
        <authorList>
            <person name="Bian Y."/>
            <person name="Song C."/>
            <person name="Cheng K."/>
            <person name="Dong M."/>
            <person name="Wang F."/>
            <person name="Huang J."/>
            <person name="Sun D."/>
            <person name="Wang L."/>
            <person name="Ye M."/>
            <person name="Zou H."/>
        </authorList>
    </citation>
    <scope>PHOSPHORYLATION [LARGE SCALE ANALYSIS] AT SER-56; SER-60 AND TYR-484</scope>
    <scope>IDENTIFICATION BY MASS SPECTROMETRY [LARGE SCALE ANALYSIS]</scope>
    <source>
        <tissue>Liver</tissue>
    </source>
</reference>
<reference key="21">
    <citation type="journal article" date="2015" name="Nat. Commun.">
        <title>mRNA export through an additional cap-binding complex consisting of NCBP1 and NCBP3.</title>
        <authorList>
            <person name="Gebhardt A."/>
            <person name="Habjan M."/>
            <person name="Benda C."/>
            <person name="Meiler A."/>
            <person name="Haas D.A."/>
            <person name="Hein M.Y."/>
            <person name="Mann A."/>
            <person name="Mann M."/>
            <person name="Habermann B."/>
            <person name="Pichlmair A."/>
        </authorList>
    </citation>
    <scope>INTERACTION WITH NCBP2 AND NCBP3</scope>
</reference>
<reference key="22">
    <citation type="journal article" date="2023" name="J. Biol. Chem.">
        <title>The RNA-binding protein ZC3H11A interacts with the nuclear poly(A)-binding protein PABPN1 and alters polyadenylation of viral transcripts.</title>
        <authorList>
            <person name="Kases K."/>
            <person name="Schubert E."/>
            <person name="Hajikhezri Z."/>
            <person name="Larsson M."/>
            <person name="Devi P."/>
            <person name="Darweesh M."/>
            <person name="Andersson L."/>
            <person name="Akusjaervi G."/>
            <person name="Punga T."/>
            <person name="Younis S."/>
        </authorList>
    </citation>
    <scope>INTERACTION WITH ZC3H11A</scope>
</reference>
<reference key="23">
    <citation type="journal article" date="2021" name="Ann. Neurol.">
        <title>Dominant KPNA3 Mutations Cause Infantile-Onset Hereditary Spastic Paraplegia.</title>
        <authorList>
            <person name="Schob C."/>
            <person name="Hempel M."/>
            <person name="Safka Brozkova D."/>
            <person name="Jiang H."/>
            <person name="Kim S.Y."/>
            <person name="Batzir N.A."/>
            <person name="Orenstein N."/>
            <person name="Bierhals T."/>
            <person name="Johannsen J."/>
            <person name="Uhrova Meszarosova A."/>
            <person name="Chae J.H."/>
            <person name="Seeman P."/>
            <person name="Woidy M."/>
            <person name="Fang F."/>
            <person name="Kubisch C."/>
            <person name="Kindler S."/>
            <person name="Denecke J."/>
        </authorList>
    </citation>
    <scope>VARIANTS SPG88 ILE-315; MET-328; PRO-328; ARG-334; PRO-350 AND LEU-415</scope>
    <scope>INVOLVEMENT IN SPG88</scope>
    <scope>CHARACTERIZATION OF VARIANTS SPG88 ILE-315; MET-328; PRO-328; ARG-334; PRO-350 AND LEU-415</scope>
    <scope>SUBCELLULAR LOCATION</scope>
    <scope>INTERACTION WITH RCC1; DDX21; NCBP1 AND NCBP2</scope>
</reference>
<reference key="24">
    <citation type="journal article" date="2022" name="Ann. Neurol.">
        <title>A Recurrent KPNA3 Missense Variant Causing Infantile Pure Spastic Paraplegia.</title>
        <authorList>
            <person name="De Winter J."/>
            <person name="Van de Vondel L."/>
            <person name="Zuechner S."/>
            <person name="Ortibus E."/>
            <person name="Baets J."/>
        </authorList>
    </citation>
    <scope>VARIANT SPG88 ILE-315</scope>
    <scope>INVOLVEMENT IN SPG88</scope>
</reference>
<reference key="25">
    <citation type="journal article" date="2022" name="Ann. Neurol.">
        <title>Heterozygous De Novo KPNA3 Mutations Cause Complex Hereditary Spastic Paraplegia.</title>
        <authorList>
            <person name="Estiar M.A."/>
            <person name="Lail N."/>
            <person name="Dyment D.A."/>
            <person name="Varghaei P."/>
            <person name="Hartley T."/>
            <person name="Gillespie M.K."/>
            <person name="Yoon G."/>
            <person name="Boycott K.M."/>
            <person name="Rouleau G.A."/>
            <person name="Gan-Or Z."/>
        </authorList>
    </citation>
    <scope>VARIANT SPG88 PRO-328</scope>
    <scope>INVOLVEMENT IN SPG88</scope>
</reference>
<keyword id="KW-0007">Acetylation</keyword>
<keyword id="KW-0963">Cytoplasm</keyword>
<keyword id="KW-0225">Disease variant</keyword>
<keyword id="KW-0890">Hereditary spastic paraplegia</keyword>
<keyword id="KW-0945">Host-virus interaction</keyword>
<keyword id="KW-0523">Neurodegeneration</keyword>
<keyword id="KW-0539">Nucleus</keyword>
<keyword id="KW-0597">Phosphoprotein</keyword>
<keyword id="KW-0653">Protein transport</keyword>
<keyword id="KW-1267">Proteomics identification</keyword>
<keyword id="KW-1185">Reference proteome</keyword>
<keyword id="KW-0677">Repeat</keyword>
<keyword id="KW-0813">Transport</keyword>
<keyword id="KW-1163">Viral penetration into host nucleus</keyword>
<keyword id="KW-1160">Virus entry into host cell</keyword>
<comment type="function">
    <text>Functions in nuclear protein import as an adapter protein for nuclear receptor KPNB1. Binds specifically and directly to substrates containing either a simple or bipartite NLS motif. Docking of the importin/substrate complex to the nuclear pore complex (NPC) is mediated by KPNB1 through binding to nucleoporin FxFG repeats and the complex is subsequently translocated through the pore by an energy requiring, Ran-dependent mechanism. At the nucleoplasmic side of the NPC, Ran binds to importin-beta and the three components separate and importin-alpha and -beta are re-exported from the nucleus to the cytoplasm where GTP hydrolysis releases Ran from importin. The directionality of nuclear import is thought to be conferred by an asymmetric distribution of the GTP- and GDP-bound forms of Ran between the cytoplasm and nucleus. In vitro, mediates the nuclear import of human cytomegalovirus UL84 by recognizing a non-classical NLS. Recognizes NLSs of influenza A virus nucleoprotein probably through ARM repeats 7-9.</text>
</comment>
<comment type="subunit">
    <text evidence="6 7 10">Forms a complex with importin subunit beta-1. Interacts with DDX21 (PubMed:34564892). Interacts with NCBP1, NCBP2/CBP20 and NCBP3 (PubMed:26382858, PubMed:34564892). Interacts with RCC1 (PubMed:34564892). Interacts with ZC3H11A (PubMed:37356722).</text>
</comment>
<comment type="subunit">
    <text evidence="5">(Microbial infection) Interacts with HIV-1 integrase; this interaction might play a role in nuclear import of HIV pre-integration complex.</text>
</comment>
<comment type="subunit">
    <text evidence="4">(Microbial infection) Interacts with influenza virus nucleoprotein; this interaction might play a role in nuclear import of viral genome.</text>
</comment>
<comment type="interaction">
    <interactant intactId="EBI-358297">
        <id>O00505</id>
    </interactant>
    <interactant intactId="EBI-3834328">
        <id>Q9GZX7</id>
        <label>AICDA</label>
    </interactant>
    <organismsDiffer>false</organismsDiffer>
    <experiments>2</experiments>
</comment>
<comment type="interaction">
    <interactant intactId="EBI-358297">
        <id>O00505</id>
    </interactant>
    <interactant intactId="EBI-17183751">
        <id>X5D778</id>
        <label>ANKRD11</label>
    </interactant>
    <organismsDiffer>false</organismsDiffer>
    <experiments>3</experiments>
</comment>
<comment type="interaction">
    <interactant intactId="EBI-358297">
        <id>O00505</id>
    </interactant>
    <interactant intactId="EBI-10175904">
        <id>B3KTP4</id>
        <label>ApoL6</label>
    </interactant>
    <organismsDiffer>false</organismsDiffer>
    <experiments>3</experiments>
</comment>
<comment type="interaction">
    <interactant intactId="EBI-358297">
        <id>O00505</id>
    </interactant>
    <interactant intactId="EBI-745689">
        <id>Q7L5A3</id>
        <label>ATOSB</label>
    </interactant>
    <organismsDiffer>false</organismsDiffer>
    <experiments>3</experiments>
</comment>
<comment type="interaction">
    <interactant intactId="EBI-358297">
        <id>O00505</id>
    </interactant>
    <interactant intactId="EBI-742750">
        <id>Q8TBE0</id>
        <label>BAHD1</label>
    </interactant>
    <organismsDiffer>false</organismsDiffer>
    <experiments>3</experiments>
</comment>
<comment type="interaction">
    <interactant intactId="EBI-358297">
        <id>O00505</id>
    </interactant>
    <interactant intactId="EBI-13468085">
        <id>Q15059-2</id>
        <label>BRD3</label>
    </interactant>
    <organismsDiffer>false</organismsDiffer>
    <experiments>3</experiments>
</comment>
<comment type="interaction">
    <interactant intactId="EBI-358297">
        <id>O00505</id>
    </interactant>
    <interactant intactId="EBI-10171570">
        <id>Q68D86</id>
        <label>CCDC102B</label>
    </interactant>
    <organismsDiffer>false</organismsDiffer>
    <experiments>3</experiments>
</comment>
<comment type="interaction">
    <interactant intactId="EBI-358297">
        <id>O00505</id>
    </interactant>
    <interactant intactId="EBI-519280">
        <id>P46527</id>
        <label>CDKN1B</label>
    </interactant>
    <organismsDiffer>false</organismsDiffer>
    <experiments>4</experiments>
</comment>
<comment type="interaction">
    <interactant intactId="EBI-358297">
        <id>O00505</id>
    </interactant>
    <interactant intactId="EBI-357942">
        <id>Q9NR30</id>
        <label>DDX21</label>
    </interactant>
    <organismsDiffer>false</organismsDiffer>
    <experiments>5</experiments>
</comment>
<comment type="interaction">
    <interactant intactId="EBI-358297">
        <id>O00505</id>
    </interactant>
    <interactant intactId="EBI-1183307">
        <id>P19447</id>
        <label>ERCC3</label>
    </interactant>
    <organismsDiffer>false</organismsDiffer>
    <experiments>4</experiments>
</comment>
<comment type="interaction">
    <interactant intactId="EBI-358297">
        <id>O00505</id>
    </interactant>
    <interactant intactId="EBI-12259414">
        <id>Q92731-3</id>
        <label>ESR2</label>
    </interactant>
    <organismsDiffer>false</organismsDiffer>
    <experiments>3</experiments>
</comment>
<comment type="interaction">
    <interactant intactId="EBI-358297">
        <id>O00505</id>
    </interactant>
    <interactant intactId="EBI-6658203">
        <id>Q86YD7</id>
        <label>FAM90A1</label>
    </interactant>
    <organismsDiffer>false</organismsDiffer>
    <experiments>4</experiments>
</comment>
<comment type="interaction">
    <interactant intactId="EBI-358297">
        <id>O00505</id>
    </interactant>
    <interactant intactId="EBI-713279">
        <id>P02792</id>
        <label>FTL</label>
    </interactant>
    <organismsDiffer>false</organismsDiffer>
    <experiments>3</experiments>
</comment>
<comment type="interaction">
    <interactant intactId="EBI-358297">
        <id>O00505</id>
    </interactant>
    <interactant intactId="EBI-12353035">
        <id>Q13322-4</id>
        <label>GRB10</label>
    </interactant>
    <organismsDiffer>false</organismsDiffer>
    <experiments>3</experiments>
</comment>
<comment type="interaction">
    <interactant intactId="EBI-358297">
        <id>O00505</id>
    </interactant>
    <interactant intactId="EBI-5460660">
        <id>Q96MH2</id>
        <label>HEXIM2</label>
    </interactant>
    <organismsDiffer>false</organismsDiffer>
    <experiments>3</experiments>
</comment>
<comment type="interaction">
    <interactant intactId="EBI-358297">
        <id>O00505</id>
    </interactant>
    <interactant intactId="EBI-357966">
        <id>P07910</id>
        <label>HNRNPC</label>
    </interactant>
    <organismsDiffer>false</organismsDiffer>
    <experiments>7</experiments>
</comment>
<comment type="interaction">
    <interactant intactId="EBI-358297">
        <id>O00505</id>
    </interactant>
    <interactant intactId="EBI-466029">
        <id>P42858</id>
        <label>HTT</label>
    </interactant>
    <organismsDiffer>false</organismsDiffer>
    <experiments>11</experiments>
</comment>
<comment type="interaction">
    <interactant intactId="EBI-358297">
        <id>O00505</id>
    </interactant>
    <interactant intactId="EBI-399080">
        <id>Q92993</id>
        <label>KAT5</label>
    </interactant>
    <organismsDiffer>false</organismsDiffer>
    <experiments>3</experiments>
</comment>
<comment type="interaction">
    <interactant intactId="EBI-358297">
        <id>O00505</id>
    </interactant>
    <interactant intactId="EBI-286758">
        <id>Q14974</id>
        <label>KPNB1</label>
    </interactant>
    <organismsDiffer>false</organismsDiffer>
    <experiments>4</experiments>
</comment>
<comment type="interaction">
    <interactant intactId="EBI-358297">
        <id>O00505</id>
    </interactant>
    <interactant intactId="EBI-12778187">
        <id>Q8NA19-2</id>
        <label>L3MBTL4</label>
    </interactant>
    <organismsDiffer>false</organismsDiffer>
    <experiments>3</experiments>
</comment>
<comment type="interaction">
    <interactant intactId="EBI-358297">
        <id>O00505</id>
    </interactant>
    <interactant intactId="EBI-713568">
        <id>P45984</id>
        <label>MAPK9</label>
    </interactant>
    <organismsDiffer>false</organismsDiffer>
    <experiments>3</experiments>
</comment>
<comment type="interaction">
    <interactant intactId="EBI-358297">
        <id>O00505</id>
    </interactant>
    <interactant intactId="EBI-10317491">
        <id>Q9NZL9</id>
        <label>MAT2B</label>
    </interactant>
    <organismsDiffer>false</organismsDiffer>
    <experiments>6</experiments>
</comment>
<comment type="interaction">
    <interactant intactId="EBI-358297">
        <id>O00505</id>
    </interactant>
    <interactant intactId="EBI-714236">
        <id>Q13330</id>
        <label>MTA1</label>
    </interactant>
    <organismsDiffer>false</organismsDiffer>
    <experiments>3</experiments>
</comment>
<comment type="interaction">
    <interactant intactId="EBI-358297">
        <id>O00505</id>
    </interactant>
    <interactant intactId="EBI-3917542">
        <id>Q9HAN9</id>
        <label>NMNAT1</label>
    </interactant>
    <organismsDiffer>false</organismsDiffer>
    <experiments>3</experiments>
</comment>
<comment type="interaction">
    <interactant intactId="EBI-358297">
        <id>O00505</id>
    </interactant>
    <interactant intactId="EBI-78579">
        <id>P06748</id>
        <label>NPM1</label>
    </interactant>
    <organismsDiffer>false</organismsDiffer>
    <experiments>2</experiments>
</comment>
<comment type="interaction">
    <interactant intactId="EBI-358297">
        <id>O00505</id>
    </interactant>
    <interactant intactId="EBI-2371082">
        <id>Q9UKX7</id>
        <label>NUP50</label>
    </interactant>
    <organismsDiffer>false</organismsDiffer>
    <experiments>7</experiments>
</comment>
<comment type="interaction">
    <interactant intactId="EBI-358297">
        <id>O00505</id>
    </interactant>
    <interactant intactId="EBI-5452779">
        <id>Q9BUI4</id>
        <label>POLR3C</label>
    </interactant>
    <organismsDiffer>false</organismsDiffer>
    <experiments>3</experiments>
</comment>
<comment type="interaction">
    <interactant intactId="EBI-358297">
        <id>O00505</id>
    </interactant>
    <interactant intactId="EBI-706448">
        <id>P43351</id>
        <label>RAD52</label>
    </interactant>
    <organismsDiffer>false</organismsDiffer>
    <experiments>3</experiments>
</comment>
<comment type="interaction">
    <interactant intactId="EBI-358297">
        <id>O00505</id>
    </interactant>
    <interactant intactId="EBI-1053506">
        <id>Q96P16</id>
        <label>RPRD1A</label>
    </interactant>
    <organismsDiffer>false</organismsDiffer>
    <experiments>3</experiments>
</comment>
<comment type="interaction">
    <interactant intactId="EBI-358297">
        <id>O00505</id>
    </interactant>
    <interactant intactId="EBI-10277669">
        <id>Q8WWX8</id>
        <label>SLC5A11</label>
    </interactant>
    <organismsDiffer>false</organismsDiffer>
    <experiments>3</experiments>
</comment>
<comment type="interaction">
    <interactant intactId="EBI-358297">
        <id>O00505</id>
    </interactant>
    <interactant intactId="EBI-12697471">
        <id>Q8WWX8-3</id>
        <label>SLC5A11</label>
    </interactant>
    <organismsDiffer>false</organismsDiffer>
    <experiments>3</experiments>
</comment>
<comment type="interaction">
    <interactant intactId="EBI-358297">
        <id>O00505</id>
    </interactant>
    <interactant intactId="EBI-743976">
        <id>Q96LM6</id>
        <label>SPMIP9</label>
    </interactant>
    <organismsDiffer>false</organismsDiffer>
    <experiments>3</experiments>
</comment>
<comment type="interaction">
    <interactant intactId="EBI-358297">
        <id>O00505</id>
    </interactant>
    <interactant intactId="EBI-11997340">
        <id>P0DTL5</id>
        <label>TMEM276</label>
    </interactant>
    <organismsDiffer>false</organismsDiffer>
    <experiments>3</experiments>
</comment>
<comment type="interaction">
    <interactant intactId="EBI-358297">
        <id>O00505</id>
    </interactant>
    <interactant intactId="EBI-2509913">
        <id>Q96KP6</id>
        <label>TNIP3</label>
    </interactant>
    <organismsDiffer>false</organismsDiffer>
    <experiments>3</experiments>
</comment>
<comment type="interaction">
    <interactant intactId="EBI-358297">
        <id>O00505</id>
    </interactant>
    <interactant intactId="EBI-717229">
        <id>Q9Y5U2</id>
        <label>TSSC4</label>
    </interactant>
    <organismsDiffer>false</organismsDiffer>
    <experiments>4</experiments>
</comment>
<comment type="interaction">
    <interactant intactId="EBI-358297">
        <id>O00505</id>
    </interactant>
    <interactant intactId="EBI-11153331">
        <id>Q2YD98</id>
        <label>UVSSA</label>
    </interactant>
    <organismsDiffer>false</organismsDiffer>
    <experiments>3</experiments>
</comment>
<comment type="interaction">
    <interactant intactId="EBI-358297">
        <id>O00505</id>
    </interactant>
    <interactant intactId="EBI-744471">
        <id>O43167</id>
        <label>ZBTB24</label>
    </interactant>
    <organismsDiffer>false</organismsDiffer>
    <experiments>3</experiments>
</comment>
<comment type="interaction">
    <interactant intactId="EBI-358297">
        <id>O00505</id>
    </interactant>
    <interactant intactId="EBI-597063">
        <id>Q8TBK6</id>
        <label>ZCCHC10</label>
    </interactant>
    <organismsDiffer>false</organismsDiffer>
    <experiments>3</experiments>
</comment>
<comment type="interaction">
    <interactant intactId="EBI-358297">
        <id>O00505</id>
    </interactant>
    <interactant intactId="EBI-748373">
        <id>Q6PEW1</id>
        <label>ZCCHC12</label>
    </interactant>
    <organismsDiffer>false</organismsDiffer>
    <experiments>3</experiments>
</comment>
<comment type="interaction">
    <interactant intactId="EBI-358297">
        <id>O00505</id>
    </interactant>
    <interactant intactId="EBI-7254550">
        <id>P36508</id>
        <label>ZNF76</label>
    </interactant>
    <organismsDiffer>false</organismsDiffer>
    <experiments>3</experiments>
</comment>
<comment type="interaction">
    <interactant intactId="EBI-358297">
        <id>O00505</id>
    </interactant>
    <interactant intactId="EBI-745775">
        <id>Q96H86</id>
        <label>ZNF764</label>
    </interactant>
    <organismsDiffer>false</organismsDiffer>
    <experiments>3</experiments>
</comment>
<comment type="interaction">
    <interactant intactId="EBI-358297">
        <id>O00505</id>
    </interactant>
    <interactant intactId="EBI-10297046">
        <id>Q9BRL8</id>
    </interactant>
    <organismsDiffer>false</organismsDiffer>
    <experiments>3</experiments>
</comment>
<comment type="interaction">
    <interactant intactId="EBI-358297">
        <id>O00505</id>
    </interactant>
    <interactant intactId="EBI-25641007">
        <id>K9N643</id>
        <label>ORF4b</label>
    </interactant>
    <organismsDiffer>true</organismsDiffer>
    <experiments>4</experiments>
</comment>
<comment type="interaction">
    <interactant intactId="EBI-358297">
        <id>O00505</id>
    </interactant>
    <interactant intactId="EBI-8430745">
        <id>P03427</id>
        <label>PB2</label>
    </interactant>
    <organismsDiffer>true</organismsDiffer>
    <experiments>3</experiments>
</comment>
<comment type="subcellular location">
    <subcellularLocation>
        <location evidence="12">Cytoplasm</location>
    </subcellularLocation>
    <subcellularLocation>
        <location evidence="7">Nucleus</location>
    </subcellularLocation>
</comment>
<comment type="tissue specificity">
    <text>Ubiquitous. Highest levels in heart and skeletal muscle.</text>
</comment>
<comment type="domain">
    <text>Consists of an N-terminal hydrophilic region, a hydrophobic central region composed of 10 repeats, and a short hydrophilic C-terminus. The N-terminal hydrophilic region contains the importin beta binding domain (IBB domain), which is sufficient for binding importin beta and essential for nuclear protein import.</text>
</comment>
<comment type="domain">
    <text evidence="1">The IBB domain is thought to act as an intrasteric autoregulatory sequence by interacting with the internal autoinhibitory NLS. Binding of KPNB1 probably overlaps the internal NLS and contributes to a high affinity for cytoplasmic NLS-containing cargo substrates. After dissociation of the importin/substrate complex in the nucleus the internal autohibitory NLS contributes to a low affinity for nuclear NLS-containing proteins (By similarity).</text>
</comment>
<comment type="domain">
    <text evidence="1">The major and minor NLS binding sites are mainly involved in recognition of simple or bipartite NLS motifs. Structurally located within in a helical surface groove they contain several conserved Trp and Asn residues of the corresponding third helices (H3) of ARM repeats which mainly contribute to binding (By similarity).</text>
</comment>
<comment type="disease" evidence="7 8 9">
    <disease id="DI-06543">
        <name>Spastic paraplegia 88, autosomal dominant</name>
        <acronym>SPG88</acronym>
        <description>A form of spastic paraplegia, a neurodegenerative disorder characterized by a slow, gradual, progressive weakness and spasticity of the lower limbs. Rate of progression and the severity of symptoms are quite variable. Initial symptoms may include difficulty with balance, weakness and stiffness in the legs, muscle spasms, and dragging the toes when walking. In some forms of the disorder, bladder symptoms (such as incontinence) may appear, or the weakness and stiffness may spread to other parts of the body. SPG88 is characterized by onset of symptoms in the first year of life. Most SPG88 patients have a pure form of the disorder, although rarely patients may manifest additional features, including peripheral neuropathy, speech delay, attention deficit-hyperactivity disorder, and non-specific brain imaging abnormalities.</description>
        <dbReference type="MIM" id="620106"/>
    </disease>
    <text>The disease is caused by variants affecting the gene represented in this entry.</text>
</comment>
<comment type="similarity">
    <text evidence="11">Belongs to the importin alpha family.</text>
</comment>
<comment type="caution">
    <text evidence="13">Was termed importin alpha-4.</text>
</comment>
<accession>O00505</accession>
<accession>O00191</accession>
<accession>O43195</accession>
<accession>Q5JVM9</accession>
<accession>Q8IYQ9</accession>
<accession>Q96AA7</accession>
<sequence>MAENPSLENHRIKSFKNKGRDVETMRRHRNEVTVELRKNKRDEHLLKKRNVPQEESLEDSDVDADFKAQNVTLEAILQNATSDNPVVQLSAVQAARKLLSSDRNPPIDDLIKSGILPILVKCLERDDNPSLQFEAAWALTNIASGTSAQTQAVVQSNAVPLFLRLLRSPHQNVCEQAVWALGNIIGDGPQCRDYVISLGVVKPLLSFISPSIPITFLRNVTWVIVNLCRNKDPPPPMETVQEILPALCVLIYHTDINILVDTVWALSYLTDGGNEQIQMVIDSGVVPFLVPLLSHQEVKVQTAALRAVGNIVTGTDEQTQVVLNCDVLSHFPNLLSHPKEKINKEAVWFLSNITAGNQQQVQAVIDAGLIPMIIHQLAKGDFGTQKEAAWAISNLTISGRKDQVEYLVQQNVIPPFCNLLSVKDSQVVQVVLDGLKNILIMAGDEASTIAEIIEECGGLEKIEVLQQHENEDIYKLAFEIIDQYFSGDDIDEDPCLIPEATQGGTYNFDPTANLQTKEFNF</sequence>